<name>HYD3_METAQ</name>
<feature type="signal peptide" evidence="3">
    <location>
        <begin position="1"/>
        <end position="17"/>
    </location>
</feature>
<feature type="chain" id="PRO_5003235321" description="Class I hydrophobin 3">
    <location>
        <begin position="18"/>
        <end position="91"/>
    </location>
</feature>
<feature type="disulfide bond" evidence="1">
    <location>
        <begin position="31"/>
        <end position="70"/>
    </location>
</feature>
<feature type="disulfide bond" evidence="1">
    <location>
        <begin position="35"/>
        <end position="61"/>
    </location>
</feature>
<feature type="disulfide bond" evidence="1">
    <location>
        <begin position="36"/>
        <end position="53"/>
    </location>
</feature>
<feature type="disulfide bond" evidence="1">
    <location>
        <begin position="71"/>
        <end position="87"/>
    </location>
</feature>
<gene>
    <name evidence="5" type="primary">HYD3</name>
    <name type="ORF">MAC_02959</name>
</gene>
<organism>
    <name type="scientific">Metarhizium acridum (strain CQMa 102)</name>
    <dbReference type="NCBI Taxonomy" id="655827"/>
    <lineage>
        <taxon>Eukaryota</taxon>
        <taxon>Fungi</taxon>
        <taxon>Dikarya</taxon>
        <taxon>Ascomycota</taxon>
        <taxon>Pezizomycotina</taxon>
        <taxon>Sordariomycetes</taxon>
        <taxon>Hypocreomycetidae</taxon>
        <taxon>Hypocreales</taxon>
        <taxon>Clavicipitaceae</taxon>
        <taxon>Metarhizium</taxon>
    </lineage>
</organism>
<sequence>MLFRLFTIPSIALGVLGSAATLPPREESANCRSVCCDAIVPSIFPSGRVGINCHWDELLDCGFSGQVDSCCEAIVPFGVKDGTGIRCSRRQ</sequence>
<evidence type="ECO:0000250" key="1">
    <source>
        <dbReference type="UniProtKB" id="D8QCG9"/>
    </source>
</evidence>
<evidence type="ECO:0000250" key="2">
    <source>
        <dbReference type="UniProtKB" id="P16933"/>
    </source>
</evidence>
<evidence type="ECO:0000255" key="3"/>
<evidence type="ECO:0000269" key="4">
    <source>
    </source>
</evidence>
<evidence type="ECO:0000303" key="5">
    <source>
    </source>
</evidence>
<evidence type="ECO:0000305" key="6"/>
<dbReference type="EMBL" id="GL698485">
    <property type="protein sequence ID" value="EFY91073.1"/>
    <property type="molecule type" value="Genomic_DNA"/>
</dbReference>
<dbReference type="RefSeq" id="XP_007809299.1">
    <property type="nucleotide sequence ID" value="XM_007811108.1"/>
</dbReference>
<dbReference type="GeneID" id="19247270"/>
<dbReference type="KEGG" id="maw:19247270"/>
<dbReference type="eggNOG" id="ENOG502RWGM">
    <property type="taxonomic scope" value="Eukaryota"/>
</dbReference>
<dbReference type="HOGENOM" id="CLU_2468712_0_0_1"/>
<dbReference type="InParanoid" id="E9DZB1"/>
<dbReference type="OMA" id="INCHWDE"/>
<dbReference type="OrthoDB" id="3439550at2759"/>
<dbReference type="Proteomes" id="UP000002499">
    <property type="component" value="Unassembled WGS sequence"/>
</dbReference>
<accession>E9DZB1</accession>
<reference key="1">
    <citation type="journal article" date="2011" name="PLoS Genet.">
        <title>Genome sequencing and comparative transcriptomics of the model entomopathogenic fungi Metarhizium anisopliae and M. acridum.</title>
        <authorList>
            <person name="Gao Q."/>
            <person name="Jin K."/>
            <person name="Ying S.-H."/>
            <person name="Zhang Y."/>
            <person name="Xiao G."/>
            <person name="Shang Y."/>
            <person name="Duan Z."/>
            <person name="Hu X."/>
            <person name="Xie X.-Q."/>
            <person name="Zhou G."/>
            <person name="Peng G."/>
            <person name="Luo Z."/>
            <person name="Huang W."/>
            <person name="Wang B."/>
            <person name="Fang W."/>
            <person name="Wang S."/>
            <person name="Zhong Y."/>
            <person name="Ma L.-J."/>
            <person name="St Leger R.J."/>
            <person name="Zhao G.-P."/>
            <person name="Pei Y."/>
            <person name="Feng M.-G."/>
            <person name="Xia Y."/>
            <person name="Wang C."/>
        </authorList>
    </citation>
    <scope>NUCLEOTIDE SEQUENCE [LARGE SCALE GENOMIC DNA]</scope>
    <source>
        <strain>CQMa 102</strain>
    </source>
</reference>
<reference key="2">
    <citation type="journal article" date="2020" name="Int. J. Biol. Macromol.">
        <title>HYD3, a conidial hydrophobin of the fungal entomopathogen Metarhizium acridum induces the immunity of its specialist host locust.</title>
        <authorList>
            <person name="Jiang Z.Y."/>
            <person name="Ligoxygakis P."/>
            <person name="Xia Y.X."/>
        </authorList>
    </citation>
    <scope>FUNCTION</scope>
    <scope>SUBCELLULAR LOCATION</scope>
    <scope>TISSUE SPECIFICITY</scope>
</reference>
<protein>
    <recommendedName>
        <fullName evidence="5">Class I hydrophobin 3</fullName>
    </recommendedName>
</protein>
<comment type="function">
    <text evidence="4 6">Aerial growth, conidiation, and dispersal of filamentous fungi in the environment rely upon a capability of their secreting small amphipathic proteins called hydrophobins (HPBs) with low sequence identity. Class I can self-assemble into an outermost layer of rodlet bundles on aerial cell surfaces, conferring cellular hydrophobicity that supports fungal growth, development and dispersal; whereas Class II form highly ordered films at water-air interfaces through intermolecular interactions but contribute nothing to the rodlet structure (Probable). HYD3 is a class I hydrophobin located on the conidial surface that activates specifically the humoral and cellular immunity of Metarhizium acridum's own host insect, Locusta migratoria manilensis (Meyen) but not that of other non-host insects (PubMed:33022346). Improves the resistance of locusts to both specialist and generalist fungal pathogens (wide host range) when topically applied to the cuticle, but has no effect on the fungal resistance of other insects, including Spodoptera frugiperda and Galleria mellonella (PubMed:33022346).</text>
</comment>
<comment type="subunit">
    <text evidence="2">Self-assembles to form functional amyloid fibrils called rodlets. Self-assembly into fibrillar rodlets occurs spontaneously at hydrophobic:hydrophilic interfaces and the rodlets further associate laterally to form amphipathic monolayers.</text>
</comment>
<comment type="subcellular location">
    <subcellularLocation>
        <location evidence="4">Secreted</location>
    </subcellularLocation>
    <subcellularLocation>
        <location evidence="4">Secreted</location>
        <location evidence="4">Cell wall</location>
    </subcellularLocation>
    <text evidence="4">Localizes on the surface of conidia.</text>
</comment>
<comment type="tissue specificity">
    <text evidence="4">Expressed in conidia.</text>
</comment>
<comment type="similarity">
    <text evidence="6">Belongs to the fungal hydrophobin family.</text>
</comment>
<proteinExistence type="evidence at transcript level"/>
<keyword id="KW-0134">Cell wall</keyword>
<keyword id="KW-1015">Disulfide bond</keyword>
<keyword id="KW-1185">Reference proteome</keyword>
<keyword id="KW-0964">Secreted</keyword>
<keyword id="KW-0732">Signal</keyword>